<dbReference type="EMBL" id="M73705">
    <property type="protein sequence ID" value="AAA49031.1"/>
    <property type="molecule type" value="mRNA"/>
</dbReference>
<dbReference type="PIR" id="A41530">
    <property type="entry name" value="A41530"/>
</dbReference>
<dbReference type="RefSeq" id="NP_990799.1">
    <property type="nucleotide sequence ID" value="NM_205468.1"/>
</dbReference>
<dbReference type="BMRB" id="Q01406"/>
<dbReference type="SMR" id="Q01406"/>
<dbReference type="BioGRID" id="676704">
    <property type="interactions" value="1"/>
</dbReference>
<dbReference type="FunCoup" id="Q01406">
    <property type="interactions" value="2222"/>
</dbReference>
<dbReference type="IntAct" id="Q01406">
    <property type="interactions" value="2"/>
</dbReference>
<dbReference type="STRING" id="9031.ENSGALP00000070879"/>
<dbReference type="GlyGen" id="Q01406">
    <property type="glycosylation" value="1 site"/>
</dbReference>
<dbReference type="iPTMnet" id="Q01406"/>
<dbReference type="PaxDb" id="9031-ENSGALP00000012463"/>
<dbReference type="KEGG" id="gga:396455"/>
<dbReference type="VEuPathDB" id="HostDB:geneid_396455"/>
<dbReference type="eggNOG" id="ENOG502QS6C">
    <property type="taxonomic scope" value="Eukaryota"/>
</dbReference>
<dbReference type="InParanoid" id="Q01406"/>
<dbReference type="PhylomeDB" id="Q01406"/>
<dbReference type="PRO" id="PR:Q01406"/>
<dbReference type="Proteomes" id="UP000000539">
    <property type="component" value="Unassembled WGS sequence"/>
</dbReference>
<dbReference type="GO" id="GO:0030054">
    <property type="term" value="C:cell junction"/>
    <property type="evidence" value="ECO:0000250"/>
    <property type="project" value="UniProtKB"/>
</dbReference>
<dbReference type="GO" id="GO:0005905">
    <property type="term" value="C:clathrin-coated pit"/>
    <property type="evidence" value="ECO:0000250"/>
    <property type="project" value="UniProtKB"/>
</dbReference>
<dbReference type="GO" id="GO:0030864">
    <property type="term" value="C:cortical actin cytoskeleton"/>
    <property type="evidence" value="ECO:0000318"/>
    <property type="project" value="GO_Central"/>
</dbReference>
<dbReference type="GO" id="GO:0030863">
    <property type="term" value="C:cortical cytoskeleton"/>
    <property type="evidence" value="ECO:0000250"/>
    <property type="project" value="UniProtKB"/>
</dbReference>
<dbReference type="GO" id="GO:0043197">
    <property type="term" value="C:dendritic spine"/>
    <property type="evidence" value="ECO:0007669"/>
    <property type="project" value="UniProtKB-SubCell"/>
</dbReference>
<dbReference type="GO" id="GO:0005783">
    <property type="term" value="C:endoplasmic reticulum"/>
    <property type="evidence" value="ECO:0007669"/>
    <property type="project" value="UniProtKB-SubCell"/>
</dbReference>
<dbReference type="GO" id="GO:0005925">
    <property type="term" value="C:focal adhesion"/>
    <property type="evidence" value="ECO:0007669"/>
    <property type="project" value="UniProtKB-SubCell"/>
</dbReference>
<dbReference type="GO" id="GO:0030027">
    <property type="term" value="C:lamellipodium"/>
    <property type="evidence" value="ECO:0000250"/>
    <property type="project" value="UniProtKB"/>
</dbReference>
<dbReference type="GO" id="GO:0005886">
    <property type="term" value="C:plasma membrane"/>
    <property type="evidence" value="ECO:0000318"/>
    <property type="project" value="GO_Central"/>
</dbReference>
<dbReference type="GO" id="GO:0002102">
    <property type="term" value="C:podosome"/>
    <property type="evidence" value="ECO:0007669"/>
    <property type="project" value="UniProtKB-SubCell"/>
</dbReference>
<dbReference type="GO" id="GO:0001726">
    <property type="term" value="C:ruffle"/>
    <property type="evidence" value="ECO:0007669"/>
    <property type="project" value="UniProtKB-SubCell"/>
</dbReference>
<dbReference type="GO" id="GO:0030427">
    <property type="term" value="C:site of polarized growth"/>
    <property type="evidence" value="ECO:0000318"/>
    <property type="project" value="GO_Central"/>
</dbReference>
<dbReference type="GO" id="GO:0051015">
    <property type="term" value="F:actin filament binding"/>
    <property type="evidence" value="ECO:0000318"/>
    <property type="project" value="GO_Central"/>
</dbReference>
<dbReference type="GO" id="GO:0030036">
    <property type="term" value="P:actin cytoskeleton organization"/>
    <property type="evidence" value="ECO:0000250"/>
    <property type="project" value="UniProtKB"/>
</dbReference>
<dbReference type="GO" id="GO:0016477">
    <property type="term" value="P:cell migration"/>
    <property type="evidence" value="ECO:0000318"/>
    <property type="project" value="GO_Central"/>
</dbReference>
<dbReference type="GO" id="GO:0048870">
    <property type="term" value="P:cell motility"/>
    <property type="evidence" value="ECO:0000250"/>
    <property type="project" value="UniProtKB"/>
</dbReference>
<dbReference type="GO" id="GO:0048041">
    <property type="term" value="P:focal adhesion assembly"/>
    <property type="evidence" value="ECO:0000250"/>
    <property type="project" value="UniProtKB"/>
</dbReference>
<dbReference type="GO" id="GO:0006886">
    <property type="term" value="P:intracellular protein transport"/>
    <property type="evidence" value="ECO:0000250"/>
    <property type="project" value="UniProtKB"/>
</dbReference>
<dbReference type="GO" id="GO:0097581">
    <property type="term" value="P:lamellipodium organization"/>
    <property type="evidence" value="ECO:0000250"/>
    <property type="project" value="UniProtKB"/>
</dbReference>
<dbReference type="GO" id="GO:0048812">
    <property type="term" value="P:neuron projection morphogenesis"/>
    <property type="evidence" value="ECO:0000250"/>
    <property type="project" value="UniProtKB"/>
</dbReference>
<dbReference type="GO" id="GO:0030838">
    <property type="term" value="P:positive regulation of actin filament polymerization"/>
    <property type="evidence" value="ECO:0000250"/>
    <property type="project" value="UniProtKB"/>
</dbReference>
<dbReference type="GO" id="GO:0006898">
    <property type="term" value="P:receptor-mediated endocytosis"/>
    <property type="evidence" value="ECO:0000250"/>
    <property type="project" value="UniProtKB"/>
</dbReference>
<dbReference type="GO" id="GO:0030833">
    <property type="term" value="P:regulation of actin filament polymerization"/>
    <property type="evidence" value="ECO:0000318"/>
    <property type="project" value="GO_Central"/>
</dbReference>
<dbReference type="GO" id="GO:0030516">
    <property type="term" value="P:regulation of axon extension"/>
    <property type="evidence" value="ECO:0000250"/>
    <property type="project" value="UniProtKB"/>
</dbReference>
<dbReference type="CDD" id="cd11959">
    <property type="entry name" value="SH3_Cortactin"/>
    <property type="match status" value="1"/>
</dbReference>
<dbReference type="FunFam" id="2.30.30.40:FF:000087">
    <property type="entry name" value="Src substrate cortactin"/>
    <property type="match status" value="1"/>
</dbReference>
<dbReference type="Gene3D" id="2.30.30.40">
    <property type="entry name" value="SH3 Domains"/>
    <property type="match status" value="1"/>
</dbReference>
<dbReference type="InterPro" id="IPR035716">
    <property type="entry name" value="Cortactin_SH3"/>
</dbReference>
<dbReference type="InterPro" id="IPR003134">
    <property type="entry name" value="Hs1_Cortactin"/>
</dbReference>
<dbReference type="InterPro" id="IPR036028">
    <property type="entry name" value="SH3-like_dom_sf"/>
</dbReference>
<dbReference type="InterPro" id="IPR001452">
    <property type="entry name" value="SH3_domain"/>
</dbReference>
<dbReference type="PANTHER" id="PTHR10829">
    <property type="entry name" value="CORTACTIN AND DREBRIN"/>
    <property type="match status" value="1"/>
</dbReference>
<dbReference type="PANTHER" id="PTHR10829:SF15">
    <property type="entry name" value="SRC SUBSTRATE CORTACTIN"/>
    <property type="match status" value="1"/>
</dbReference>
<dbReference type="Pfam" id="PF02218">
    <property type="entry name" value="HS1_rep"/>
    <property type="match status" value="7"/>
</dbReference>
<dbReference type="Pfam" id="PF14604">
    <property type="entry name" value="SH3_9"/>
    <property type="match status" value="1"/>
</dbReference>
<dbReference type="PRINTS" id="PR00499">
    <property type="entry name" value="P67PHOX"/>
</dbReference>
<dbReference type="PRINTS" id="PR00452">
    <property type="entry name" value="SH3DOMAIN"/>
</dbReference>
<dbReference type="SMART" id="SM00326">
    <property type="entry name" value="SH3"/>
    <property type="match status" value="1"/>
</dbReference>
<dbReference type="SUPFAM" id="SSF50044">
    <property type="entry name" value="SH3-domain"/>
    <property type="match status" value="1"/>
</dbReference>
<dbReference type="PROSITE" id="PS51090">
    <property type="entry name" value="CORTACTIN"/>
    <property type="match status" value="7"/>
</dbReference>
<dbReference type="PROSITE" id="PS50002">
    <property type="entry name" value="SH3"/>
    <property type="match status" value="1"/>
</dbReference>
<protein>
    <recommendedName>
        <fullName>Src substrate protein p85</fullName>
    </recommendedName>
    <alternativeName>
        <fullName>Cortactin</fullName>
    </alternativeName>
    <alternativeName>
        <fullName>p80</fullName>
    </alternativeName>
</protein>
<organism>
    <name type="scientific">Gallus gallus</name>
    <name type="common">Chicken</name>
    <dbReference type="NCBI Taxonomy" id="9031"/>
    <lineage>
        <taxon>Eukaryota</taxon>
        <taxon>Metazoa</taxon>
        <taxon>Chordata</taxon>
        <taxon>Craniata</taxon>
        <taxon>Vertebrata</taxon>
        <taxon>Euteleostomi</taxon>
        <taxon>Archelosauria</taxon>
        <taxon>Archosauria</taxon>
        <taxon>Dinosauria</taxon>
        <taxon>Saurischia</taxon>
        <taxon>Theropoda</taxon>
        <taxon>Coelurosauria</taxon>
        <taxon>Aves</taxon>
        <taxon>Neognathae</taxon>
        <taxon>Galloanserae</taxon>
        <taxon>Galliformes</taxon>
        <taxon>Phasianidae</taxon>
        <taxon>Phasianinae</taxon>
        <taxon>Gallus</taxon>
    </lineage>
</organism>
<gene>
    <name type="primary">CTTN1</name>
    <name type="synonym">EMS1</name>
    <name type="synonym">P85.25</name>
</gene>
<reference key="1">
    <citation type="journal article" date="1991" name="Mol. Cell. Biol.">
        <title>Identification and characterization of a novel cytoskeleton-associated pp60src substrate.</title>
        <authorList>
            <person name="Wu H."/>
            <person name="Reynolds A.B."/>
            <person name="Kanner S.B."/>
            <person name="Vines R.R."/>
            <person name="Parsons J.T."/>
        </authorList>
    </citation>
    <scope>NUCLEOTIDE SEQUENCE [MRNA]</scope>
    <scope>SUBCELLULAR LOCATION</scope>
    <scope>PHOSPHORYLATION</scope>
</reference>
<evidence type="ECO:0000250" key="1"/>
<evidence type="ECO:0000250" key="2">
    <source>
        <dbReference type="UniProtKB" id="Q14247"/>
    </source>
</evidence>
<evidence type="ECO:0000250" key="3">
    <source>
        <dbReference type="UniProtKB" id="Q66HL2"/>
    </source>
</evidence>
<evidence type="ECO:0000255" key="4"/>
<evidence type="ECO:0000255" key="5">
    <source>
        <dbReference type="PROSITE-ProRule" id="PRU00192"/>
    </source>
</evidence>
<evidence type="ECO:0000256" key="6">
    <source>
        <dbReference type="SAM" id="MobiDB-lite"/>
    </source>
</evidence>
<evidence type="ECO:0000269" key="7">
    <source>
    </source>
</evidence>
<evidence type="ECO:0000305" key="8"/>
<feature type="chain" id="PRO_0000022411" description="Src substrate protein p85">
    <location>
        <begin position="1"/>
        <end position="563"/>
    </location>
</feature>
<feature type="repeat" description="Cortactin 1">
    <location>
        <begin position="89"/>
        <end position="125"/>
    </location>
</feature>
<feature type="repeat" description="Cortactin 2">
    <location>
        <begin position="126"/>
        <end position="162"/>
    </location>
</feature>
<feature type="repeat" description="Cortactin 3">
    <location>
        <begin position="163"/>
        <end position="199"/>
    </location>
</feature>
<feature type="repeat" description="Cortactin 4">
    <location>
        <begin position="200"/>
        <end position="236"/>
    </location>
</feature>
<feature type="repeat" description="Cortactin 5">
    <location>
        <begin position="237"/>
        <end position="273"/>
    </location>
</feature>
<feature type="repeat" description="Cortactin 6">
    <location>
        <begin position="274"/>
        <end position="310"/>
    </location>
</feature>
<feature type="repeat" description="Cortactin 7; truncated">
    <location>
        <begin position="311"/>
        <end position="333"/>
    </location>
</feature>
<feature type="domain" description="SH3" evidence="5">
    <location>
        <begin position="505"/>
        <end position="563"/>
    </location>
</feature>
<feature type="region of interest" description="Disordered" evidence="6">
    <location>
        <begin position="331"/>
        <end position="477"/>
    </location>
</feature>
<feature type="coiled-coil region" evidence="4">
    <location>
        <begin position="349"/>
        <end position="410"/>
    </location>
</feature>
<feature type="compositionally biased region" description="Basic and acidic residues" evidence="6">
    <location>
        <begin position="366"/>
        <end position="405"/>
    </location>
</feature>
<feature type="splice variant" id="VSP_018797" description="In isoform p80." evidence="8">
    <location>
        <begin position="1"/>
        <end position="10"/>
    </location>
</feature>
<comment type="function">
    <text evidence="2 3">Contributes to the organization of the actin cytoskeleton and cell shape (By similarity). Plays a role in the formation of lamellipodia and in cell migration (By similarity). Plays a role in the regulation of neuron morphology, axon growth and formation of neuronal growth cones, and may play a role in the regulation of neuronal spine density (By similarity). Plays a role in focal adhesion assembly and turnover (By similarity). Plays a role in intracellular protein transport and endocytosis, and in modulating the levels of potassium channels present at the cell membrane (By similarity). Plays a role in endocytosis via clathrin-coated pits (By similarity).</text>
</comment>
<comment type="interaction">
    <interactant intactId="EBI-2530463">
        <id>Q01406</id>
    </interactant>
    <interactant intactId="EBI-1635766">
        <id>Q8AYS8</id>
        <label>KCNMA1</label>
    </interactant>
    <organismsDiffer>false</organismsDiffer>
    <experiments>2</experiments>
</comment>
<comment type="interaction">
    <interactant intactId="EBI-2530463">
        <id>Q01406</id>
    </interactant>
    <interactant intactId="EBI-642337">
        <id>P39054</id>
        <label>Dnm2</label>
    </interactant>
    <organismsDiffer>true</organismsDiffer>
    <experiments>2</experiments>
</comment>
<comment type="subcellular location">
    <subcellularLocation>
        <location evidence="7">Cytoplasm</location>
        <location evidence="7">Cytoskeleton</location>
    </subcellularLocation>
    <subcellularLocation>
        <location evidence="1">Cell projection</location>
        <location evidence="1">Lamellipodium</location>
    </subcellularLocation>
    <subcellularLocation>
        <location evidence="1">Cell projection</location>
        <location evidence="1">Ruffle</location>
    </subcellularLocation>
    <subcellularLocation>
        <location evidence="1">Cell projection</location>
        <location evidence="1">Dendrite</location>
    </subcellularLocation>
    <subcellularLocation>
        <location evidence="3">Cell projection</location>
    </subcellularLocation>
    <subcellularLocation>
        <location evidence="7">Cell membrane</location>
    </subcellularLocation>
    <subcellularLocation>
        <location evidence="7">Cell projection</location>
        <location evidence="7">Podosome</location>
    </subcellularLocation>
    <subcellularLocation>
        <location evidence="3">Cell junction</location>
    </subcellularLocation>
    <subcellularLocation>
        <location evidence="3">Cell junction</location>
        <location evidence="3">Focal adhesion</location>
    </subcellularLocation>
    <subcellularLocation>
        <location evidence="3">Membrane</location>
        <location evidence="3">Clathrin-coated pit</location>
    </subcellularLocation>
    <subcellularLocation>
        <location evidence="1">Cell projection</location>
        <location evidence="1">Dendritic spine</location>
    </subcellularLocation>
    <subcellularLocation>
        <location evidence="2">Cytoplasm</location>
        <location evidence="2">Cell cortex</location>
    </subcellularLocation>
    <subcellularLocation>
        <location evidence="7">Endoplasmic reticulum</location>
    </subcellularLocation>
    <text evidence="1 3 7">Colocalizes transiently with PTK2/FAK1 at focal adhesions (By similarity). Associated with membrane ruffles and lamellipodia. In normal cells, probably in association with the plasma membrane and possibly the endoplasmic reticulum (PubMed:1922035). p80/85 colocalizes with F-actin in peripheral extensions of normal cells and rosettes (podosomes) of src-transformed cells. p80/85 probably associates with components of the cytoskeleton. In response to neuronal activation by glutamate, redistributes from dendritic spines to the dendritic shaft (By similarity).</text>
</comment>
<comment type="alternative products">
    <event type="alternative initiation"/>
    <isoform>
        <id>Q01406-1</id>
        <name>p85</name>
        <sequence type="displayed"/>
    </isoform>
    <isoform>
        <id>Q01406-2</id>
        <name>p80</name>
        <sequence type="described" ref="VSP_018797"/>
    </isoform>
</comment>
<comment type="domain">
    <text evidence="8">The SH3 motif may mediate binding to the cytoskeleton.</text>
</comment>
<comment type="PTM">
    <text evidence="2">Acetylated.</text>
</comment>
<comment type="PTM">
    <text evidence="7">In normal cells, appears to be phosphorylated on serine and threonine; in cells expressing activated forms of pp60-src, they become heavily phosphorylated on tyrosine in vitro. Tyrosine phosphorylation in transformed cells may contribute to cellular growth regulation and transformation.</text>
</comment>
<accession>Q01406</accession>
<name>SRC8_CHICK</name>
<proteinExistence type="evidence at protein level"/>
<sequence>MTVLLLVVLQMWKATAGHSIAVSQDDGADDWETDPDFVNDVSEKEQRWGAKTVKGSGHQEHINIHQLRENVFQEHQTIKEKELETGPKASHGYGGKFGVEQDRMDKSAVGHEYQSKLSKHCSQVDSVKGFGGKFGVQTDRVDQSAVGFEYQGKTEKHASQKDYSSGFGGKYGVQADRVDKSAVGFDYQGKTEKHESQKDYSKGFGGKYGVDKDKVDKSAVGFEYQGKTEKHESQKDYVKGFGGKFGVQTDRQDKCALGWDHQEKVQLHESQKDYKSGFGGKFGVQTERQDPSAVGFDYKEKLAKHESQQDYSKGFGGKYGVQKDRMDKNAATFEDIEKPTSTYQKTKPVERVANKTSSIRANLENLAKEKEQEDRRKAEAERAQRMAREKQEQEEARRKLEEQAKAKKQTPPPSPTTQPAEPKTPSSPVYQDAVSYDAESAYKNSSTTYSAEHEPESGYKTTGSDYQEAVSQREAEYEPETVYEVAGAGDHYQAEENTYDEYENELGITAIALYDYQAAGDDEISFDPDDIITNIEMIDDGWWRGVCKGRYGLFPANYVELRQ</sequence>
<keyword id="KW-0024">Alternative initiation</keyword>
<keyword id="KW-0965">Cell junction</keyword>
<keyword id="KW-1003">Cell membrane</keyword>
<keyword id="KW-0966">Cell projection</keyword>
<keyword id="KW-0168">Coated pit</keyword>
<keyword id="KW-0175">Coiled coil</keyword>
<keyword id="KW-0963">Cytoplasm</keyword>
<keyword id="KW-0206">Cytoskeleton</keyword>
<keyword id="KW-0254">Endocytosis</keyword>
<keyword id="KW-0256">Endoplasmic reticulum</keyword>
<keyword id="KW-0472">Membrane</keyword>
<keyword id="KW-0597">Phosphoprotein</keyword>
<keyword id="KW-1185">Reference proteome</keyword>
<keyword id="KW-0677">Repeat</keyword>
<keyword id="KW-0728">SH3 domain</keyword>
<keyword id="KW-0770">Synapse</keyword>